<organism>
    <name type="scientific">Mus musculus</name>
    <name type="common">Mouse</name>
    <dbReference type="NCBI Taxonomy" id="10090"/>
    <lineage>
        <taxon>Eukaryota</taxon>
        <taxon>Metazoa</taxon>
        <taxon>Chordata</taxon>
        <taxon>Craniata</taxon>
        <taxon>Vertebrata</taxon>
        <taxon>Euteleostomi</taxon>
        <taxon>Mammalia</taxon>
        <taxon>Eutheria</taxon>
        <taxon>Euarchontoglires</taxon>
        <taxon>Glires</taxon>
        <taxon>Rodentia</taxon>
        <taxon>Myomorpha</taxon>
        <taxon>Muroidea</taxon>
        <taxon>Muridae</taxon>
        <taxon>Murinae</taxon>
        <taxon>Mus</taxon>
        <taxon>Mus</taxon>
    </lineage>
</organism>
<keyword id="KW-0007">Acetylation</keyword>
<keyword id="KW-0152">Cholesterol biosynthesis</keyword>
<keyword id="KW-0153">Cholesterol metabolism</keyword>
<keyword id="KW-0968">Cytoplasmic vesicle</keyword>
<keyword id="KW-0903">Direct protein sequencing</keyword>
<keyword id="KW-0225">Disease variant</keyword>
<keyword id="KW-0256">Endoplasmic reticulum</keyword>
<keyword id="KW-0378">Hydrolase</keyword>
<keyword id="KW-0413">Isomerase</keyword>
<keyword id="KW-0444">Lipid biosynthesis</keyword>
<keyword id="KW-0443">Lipid metabolism</keyword>
<keyword id="KW-0472">Membrane</keyword>
<keyword id="KW-0539">Nucleus</keyword>
<keyword id="KW-1185">Reference proteome</keyword>
<keyword id="KW-0752">Steroid biosynthesis</keyword>
<keyword id="KW-0753">Steroid metabolism</keyword>
<keyword id="KW-0756">Sterol biosynthesis</keyword>
<keyword id="KW-1207">Sterol metabolism</keyword>
<keyword id="KW-0812">Transmembrane</keyword>
<keyword id="KW-1133">Transmembrane helix</keyword>
<name>EBP_MOUSE</name>
<comment type="function">
    <text evidence="5">Isomerase that catalyzes the conversion of Delta(8)-sterols to their corresponding Delta(7)-isomers.</text>
</comment>
<comment type="function">
    <text evidence="1">Component of the microsomal antiestrogen binding site (AEBS), a multiproteic complex at the ER membrane that consists of an association between EBP and 7-dehydrocholesterol reductase/DHCR7. This complex is responsible for cholesterol-5,6-epoxide hydrolase (ChEH) activity, which consists in the hydration of cholesterol-5,6-epoxides (5,6-EC) into cholestane-3beta,5alpha,6beta-triol (CT). The precise role of each component of this complex has not been described yet.</text>
</comment>
<comment type="catalytic activity">
    <reaction evidence="5">
        <text>lathosterol = 5alpha-cholest-8-en-3beta-ol</text>
        <dbReference type="Rhea" id="RHEA:15281"/>
        <dbReference type="ChEBI" id="CHEBI:16608"/>
        <dbReference type="ChEBI" id="CHEBI:17168"/>
        <dbReference type="EC" id="5.3.3.5"/>
    </reaction>
    <physiologicalReaction direction="left-to-right" evidence="8">
        <dbReference type="Rhea" id="RHEA:15282"/>
    </physiologicalReaction>
</comment>
<comment type="catalytic activity">
    <reaction evidence="1">
        <text>zymosterol = 5alpha-cholesta-7,24-dien-3beta-ol</text>
        <dbReference type="Rhea" id="RHEA:33999"/>
        <dbReference type="ChEBI" id="CHEBI:16290"/>
        <dbReference type="ChEBI" id="CHEBI:18252"/>
    </reaction>
    <physiologicalReaction direction="left-to-right" evidence="1">
        <dbReference type="Rhea" id="RHEA:34000"/>
    </physiologicalReaction>
</comment>
<comment type="catalytic activity">
    <reaction evidence="1">
        <text>5,6alpha-epoxy-5alpha-cholestan-3beta-ol + H2O = 5alpha-cholestane-3beta,5,6beta-triol</text>
        <dbReference type="Rhea" id="RHEA:11964"/>
        <dbReference type="ChEBI" id="CHEBI:15377"/>
        <dbReference type="ChEBI" id="CHEBI:28082"/>
        <dbReference type="ChEBI" id="CHEBI:49305"/>
        <dbReference type="EC" id="3.3.2.11"/>
    </reaction>
    <physiologicalReaction direction="left-to-right" evidence="1">
        <dbReference type="Rhea" id="RHEA:11965"/>
    </physiologicalReaction>
</comment>
<comment type="catalytic activity">
    <reaction evidence="1">
        <text>5,6beta-epoxy-5beta-cholestan-3beta-ol + H2O = 5alpha-cholestane-3beta,5,6beta-triol</text>
        <dbReference type="Rhea" id="RHEA:15113"/>
        <dbReference type="ChEBI" id="CHEBI:15377"/>
        <dbReference type="ChEBI" id="CHEBI:28082"/>
        <dbReference type="ChEBI" id="CHEBI:28164"/>
        <dbReference type="EC" id="3.3.2.11"/>
    </reaction>
    <physiologicalReaction direction="left-to-right" evidence="1">
        <dbReference type="Rhea" id="RHEA:15114"/>
    </physiologicalReaction>
</comment>
<comment type="pathway">
    <text evidence="5">Steroid biosynthesis; cholesterol biosynthesis.</text>
</comment>
<comment type="subcellular location">
    <subcellularLocation>
        <location evidence="1">Endoplasmic reticulum membrane</location>
        <topology evidence="1">Multi-pass membrane protein</topology>
    </subcellularLocation>
    <subcellularLocation>
        <location evidence="1">Nucleus envelope</location>
    </subcellularLocation>
    <subcellularLocation>
        <location evidence="1">Cytoplasmic vesicle</location>
    </subcellularLocation>
    <text evidence="1">During interphase, detected on the endoplasmic reticulum and the nuclear envelope. During mitosis, detected on cytoplasmic vesicles.</text>
</comment>
<comment type="disease">
    <text>Defects in Ebp are a cause of 'Tattered' (Td) which is an X-linked, semidominant mouse mutation associated with prenatal male lethality. Heterozygous females are small and at 4 to 5 days of age develop patches of hyperkeratotic skin where no hair grows, resulting in a striping of the coat in adults. Craniofacial anomalies and twisted toes have also been observed in some affected females.</text>
</comment>
<comment type="miscellaneous">
    <text>Binds to the phenylalkylamine calcium-ion antagonist emopamil, an anti-ischemic drug.</text>
</comment>
<comment type="similarity">
    <text evidence="7">Belongs to the EBP family.</text>
</comment>
<reference key="1">
    <citation type="journal article" date="1996" name="J. Biol. Chem.">
        <title>Emopamil-binding protein, a mammalian protein that binds a series of structurally diverse neuroprotective agents, exhibits delta8-delta7 sterol isomerase activity in yeast.</title>
        <authorList>
            <person name="Silve S."/>
            <person name="Dupuy P.H."/>
            <person name="Labit-Lebouteiller C."/>
            <person name="Kaghad M."/>
            <person name="Chalon P."/>
            <person name="Rahier A."/>
            <person name="Taton M."/>
            <person name="Lupker J."/>
            <person name="Shire D."/>
            <person name="Loison G."/>
        </authorList>
    </citation>
    <scope>NUCLEOTIDE SEQUENCE [MRNA]</scope>
    <scope>CATALYTIC ACTIVITY</scope>
    <scope>FUNCTION</scope>
    <scope>PATHWAY</scope>
</reference>
<reference key="2">
    <citation type="journal article" date="2005" name="Science">
        <title>The transcriptional landscape of the mammalian genome.</title>
        <authorList>
            <person name="Carninci P."/>
            <person name="Kasukawa T."/>
            <person name="Katayama S."/>
            <person name="Gough J."/>
            <person name="Frith M.C."/>
            <person name="Maeda N."/>
            <person name="Oyama R."/>
            <person name="Ravasi T."/>
            <person name="Lenhard B."/>
            <person name="Wells C."/>
            <person name="Kodzius R."/>
            <person name="Shimokawa K."/>
            <person name="Bajic V.B."/>
            <person name="Brenner S.E."/>
            <person name="Batalov S."/>
            <person name="Forrest A.R."/>
            <person name="Zavolan M."/>
            <person name="Davis M.J."/>
            <person name="Wilming L.G."/>
            <person name="Aidinis V."/>
            <person name="Allen J.E."/>
            <person name="Ambesi-Impiombato A."/>
            <person name="Apweiler R."/>
            <person name="Aturaliya R.N."/>
            <person name="Bailey T.L."/>
            <person name="Bansal M."/>
            <person name="Baxter L."/>
            <person name="Beisel K.W."/>
            <person name="Bersano T."/>
            <person name="Bono H."/>
            <person name="Chalk A.M."/>
            <person name="Chiu K.P."/>
            <person name="Choudhary V."/>
            <person name="Christoffels A."/>
            <person name="Clutterbuck D.R."/>
            <person name="Crowe M.L."/>
            <person name="Dalla E."/>
            <person name="Dalrymple B.P."/>
            <person name="de Bono B."/>
            <person name="Della Gatta G."/>
            <person name="di Bernardo D."/>
            <person name="Down T."/>
            <person name="Engstrom P."/>
            <person name="Fagiolini M."/>
            <person name="Faulkner G."/>
            <person name="Fletcher C.F."/>
            <person name="Fukushima T."/>
            <person name="Furuno M."/>
            <person name="Futaki S."/>
            <person name="Gariboldi M."/>
            <person name="Georgii-Hemming P."/>
            <person name="Gingeras T.R."/>
            <person name="Gojobori T."/>
            <person name="Green R.E."/>
            <person name="Gustincich S."/>
            <person name="Harbers M."/>
            <person name="Hayashi Y."/>
            <person name="Hensch T.K."/>
            <person name="Hirokawa N."/>
            <person name="Hill D."/>
            <person name="Huminiecki L."/>
            <person name="Iacono M."/>
            <person name="Ikeo K."/>
            <person name="Iwama A."/>
            <person name="Ishikawa T."/>
            <person name="Jakt M."/>
            <person name="Kanapin A."/>
            <person name="Katoh M."/>
            <person name="Kawasawa Y."/>
            <person name="Kelso J."/>
            <person name="Kitamura H."/>
            <person name="Kitano H."/>
            <person name="Kollias G."/>
            <person name="Krishnan S.P."/>
            <person name="Kruger A."/>
            <person name="Kummerfeld S.K."/>
            <person name="Kurochkin I.V."/>
            <person name="Lareau L.F."/>
            <person name="Lazarevic D."/>
            <person name="Lipovich L."/>
            <person name="Liu J."/>
            <person name="Liuni S."/>
            <person name="McWilliam S."/>
            <person name="Madan Babu M."/>
            <person name="Madera M."/>
            <person name="Marchionni L."/>
            <person name="Matsuda H."/>
            <person name="Matsuzawa S."/>
            <person name="Miki H."/>
            <person name="Mignone F."/>
            <person name="Miyake S."/>
            <person name="Morris K."/>
            <person name="Mottagui-Tabar S."/>
            <person name="Mulder N."/>
            <person name="Nakano N."/>
            <person name="Nakauchi H."/>
            <person name="Ng P."/>
            <person name="Nilsson R."/>
            <person name="Nishiguchi S."/>
            <person name="Nishikawa S."/>
            <person name="Nori F."/>
            <person name="Ohara O."/>
            <person name="Okazaki Y."/>
            <person name="Orlando V."/>
            <person name="Pang K.C."/>
            <person name="Pavan W.J."/>
            <person name="Pavesi G."/>
            <person name="Pesole G."/>
            <person name="Petrovsky N."/>
            <person name="Piazza S."/>
            <person name="Reed J."/>
            <person name="Reid J.F."/>
            <person name="Ring B.Z."/>
            <person name="Ringwald M."/>
            <person name="Rost B."/>
            <person name="Ruan Y."/>
            <person name="Salzberg S.L."/>
            <person name="Sandelin A."/>
            <person name="Schneider C."/>
            <person name="Schoenbach C."/>
            <person name="Sekiguchi K."/>
            <person name="Semple C.A."/>
            <person name="Seno S."/>
            <person name="Sessa L."/>
            <person name="Sheng Y."/>
            <person name="Shibata Y."/>
            <person name="Shimada H."/>
            <person name="Shimada K."/>
            <person name="Silva D."/>
            <person name="Sinclair B."/>
            <person name="Sperling S."/>
            <person name="Stupka E."/>
            <person name="Sugiura K."/>
            <person name="Sultana R."/>
            <person name="Takenaka Y."/>
            <person name="Taki K."/>
            <person name="Tammoja K."/>
            <person name="Tan S.L."/>
            <person name="Tang S."/>
            <person name="Taylor M.S."/>
            <person name="Tegner J."/>
            <person name="Teichmann S.A."/>
            <person name="Ueda H.R."/>
            <person name="van Nimwegen E."/>
            <person name="Verardo R."/>
            <person name="Wei C.L."/>
            <person name="Yagi K."/>
            <person name="Yamanishi H."/>
            <person name="Zabarovsky E."/>
            <person name="Zhu S."/>
            <person name="Zimmer A."/>
            <person name="Hide W."/>
            <person name="Bult C."/>
            <person name="Grimmond S.M."/>
            <person name="Teasdale R.D."/>
            <person name="Liu E.T."/>
            <person name="Brusic V."/>
            <person name="Quackenbush J."/>
            <person name="Wahlestedt C."/>
            <person name="Mattick J.S."/>
            <person name="Hume D.A."/>
            <person name="Kai C."/>
            <person name="Sasaki D."/>
            <person name="Tomaru Y."/>
            <person name="Fukuda S."/>
            <person name="Kanamori-Katayama M."/>
            <person name="Suzuki M."/>
            <person name="Aoki J."/>
            <person name="Arakawa T."/>
            <person name="Iida J."/>
            <person name="Imamura K."/>
            <person name="Itoh M."/>
            <person name="Kato T."/>
            <person name="Kawaji H."/>
            <person name="Kawagashira N."/>
            <person name="Kawashima T."/>
            <person name="Kojima M."/>
            <person name="Kondo S."/>
            <person name="Konno H."/>
            <person name="Nakano K."/>
            <person name="Ninomiya N."/>
            <person name="Nishio T."/>
            <person name="Okada M."/>
            <person name="Plessy C."/>
            <person name="Shibata K."/>
            <person name="Shiraki T."/>
            <person name="Suzuki S."/>
            <person name="Tagami M."/>
            <person name="Waki K."/>
            <person name="Watahiki A."/>
            <person name="Okamura-Oho Y."/>
            <person name="Suzuki H."/>
            <person name="Kawai J."/>
            <person name="Hayashizaki Y."/>
        </authorList>
    </citation>
    <scope>NUCLEOTIDE SEQUENCE [LARGE SCALE MRNA]</scope>
    <source>
        <strain>C57BL/6J</strain>
        <tissue>Embryo</tissue>
    </source>
</reference>
<reference key="3">
    <citation type="journal article" date="2004" name="Genome Res.">
        <title>The status, quality, and expansion of the NIH full-length cDNA project: the Mammalian Gene Collection (MGC).</title>
        <authorList>
            <consortium name="The MGC Project Team"/>
        </authorList>
    </citation>
    <scope>NUCLEOTIDE SEQUENCE [LARGE SCALE MRNA]</scope>
    <source>
        <tissue>Mammary tumor</tissue>
    </source>
</reference>
<reference key="4">
    <citation type="submission" date="2005-10" db="UniProtKB">
        <authorList>
            <person name="Kanor S."/>
            <person name="Bienvenut W.V."/>
        </authorList>
    </citation>
    <scope>PROTEIN SEQUENCE OF 2-14; 53-62 AND 210-221</scope>
    <scope>CLEAVAGE OF INITIATOR METHIONINE</scope>
    <scope>ACETYLATION AT THR-2</scope>
    <scope>IDENTIFICATION BY MASS SPECTROMETRY</scope>
    <source>
        <strain>C57BL/6J</strain>
        <tissue>Liver</tissue>
    </source>
</reference>
<reference key="5">
    <citation type="journal article" date="2010" name="Cell">
        <title>A tissue-specific atlas of mouse protein phosphorylation and expression.</title>
        <authorList>
            <person name="Huttlin E.L."/>
            <person name="Jedrychowski M.P."/>
            <person name="Elias J.E."/>
            <person name="Goswami T."/>
            <person name="Rad R."/>
            <person name="Beausoleil S.A."/>
            <person name="Villen J."/>
            <person name="Haas W."/>
            <person name="Sowa M.E."/>
            <person name="Gygi S.P."/>
        </authorList>
    </citation>
    <scope>IDENTIFICATION BY MASS SPECTROMETRY [LARGE SCALE ANALYSIS]</scope>
    <source>
        <tissue>Heart</tissue>
        <tissue>Kidney</tissue>
        <tissue>Liver</tissue>
        <tissue>Lung</tissue>
        <tissue>Pancreas</tissue>
        <tissue>Spleen</tissue>
        <tissue>Testis</tissue>
    </source>
</reference>
<reference key="6">
    <citation type="journal article" date="1999" name="Nat. Genet.">
        <title>Mutations in a delta(8)-delta(7) sterol isomerase in the tattered mouse and X-linked dominant chondrodysplasia punctata.</title>
        <authorList>
            <person name="Derry J.M.J."/>
            <person name="Gormally E."/>
            <person name="Means G.D."/>
            <person name="Zhao W."/>
            <person name="Meindl A."/>
            <person name="Kelley R.I."/>
            <person name="Boyd Y."/>
            <person name="Herman G.E."/>
        </authorList>
    </citation>
    <scope>VARIANT TD ARG-107</scope>
</reference>
<feature type="initiator methionine" description="Removed" evidence="6">
    <location>
        <position position="1"/>
    </location>
</feature>
<feature type="chain" id="PRO_0000174343" description="3-beta-hydroxysteroid-Delta(8),Delta(7)-isomerase">
    <location>
        <begin position="2"/>
        <end position="230"/>
    </location>
</feature>
<feature type="transmembrane region" description="Helical" evidence="2">
    <location>
        <begin position="29"/>
        <end position="49"/>
    </location>
</feature>
<feature type="transmembrane region" description="Helical" evidence="2">
    <location>
        <begin position="66"/>
        <end position="86"/>
    </location>
</feature>
<feature type="transmembrane region" description="Helical" evidence="2">
    <location>
        <begin position="121"/>
        <end position="141"/>
    </location>
</feature>
<feature type="transmembrane region" description="Helical" evidence="2">
    <location>
        <begin position="185"/>
        <end position="205"/>
    </location>
</feature>
<feature type="domain" description="EXPERA" evidence="3">
    <location>
        <begin position="61"/>
        <end position="204"/>
    </location>
</feature>
<feature type="modified residue" description="N-acetylthreonine" evidence="6">
    <location>
        <position position="2"/>
    </location>
</feature>
<feature type="sequence variant" description="In Td." evidence="4">
    <original>G</original>
    <variation>R</variation>
    <location>
        <position position="107"/>
    </location>
</feature>
<sequence length="230" mass="26215">MTTNTVPLHPYWPRHLKLDNFVPNDLPTSHILVGLFSISGGLIVITWLLSSRASVVPLGAGRRLALCWFAVCTFIHLVIEGWFSLYNGILLEDQAFLSQLWKEYSKGDSRYILSDSFVVCMETVTACLWGPLSLWVVIAFLRQQPFRFVLQLVVSMGQIYGDVLYFLTELHEGLQHGEIGHPVYFWFYFVFLNAVWLVIPSILVLDAIKHLTSAQSVLDSKVMKIKSKHN</sequence>
<protein>
    <recommendedName>
        <fullName evidence="7">3-beta-hydroxysteroid-Delta(8),Delta(7)-isomerase</fullName>
        <ecNumber evidence="5">5.3.3.5</ecNumber>
    </recommendedName>
    <alternativeName>
        <fullName>Cholestenol Delta-isomerase</fullName>
    </alternativeName>
    <alternativeName>
        <fullName evidence="1">Cholesterol-5,6-epoxide hydrolase subunit EBP</fullName>
        <ecNumber evidence="1">3.3.2.11</ecNumber>
    </alternativeName>
    <alternativeName>
        <fullName>Delta(8)-Delta(7) sterol isomerase</fullName>
        <shortName>D8-D7 sterol isomerase</shortName>
    </alternativeName>
    <alternativeName>
        <fullName>Emopamil-binding protein</fullName>
    </alternativeName>
</protein>
<evidence type="ECO:0000250" key="1">
    <source>
        <dbReference type="UniProtKB" id="Q15125"/>
    </source>
</evidence>
<evidence type="ECO:0000255" key="2"/>
<evidence type="ECO:0000255" key="3">
    <source>
        <dbReference type="PROSITE-ProRule" id="PRU01087"/>
    </source>
</evidence>
<evidence type="ECO:0000269" key="4">
    <source>
    </source>
</evidence>
<evidence type="ECO:0000269" key="5">
    <source>
    </source>
</evidence>
<evidence type="ECO:0000269" key="6">
    <source ref="4"/>
</evidence>
<evidence type="ECO:0000305" key="7"/>
<evidence type="ECO:0000305" key="8">
    <source>
    </source>
</evidence>
<evidence type="ECO:0000312" key="9">
    <source>
        <dbReference type="MGI" id="MGI:107822"/>
    </source>
</evidence>
<gene>
    <name evidence="9" type="primary">Ebp</name>
    <name type="synonym">Msi</name>
</gene>
<accession>P70245</accession>
<accession>Q9CSP4</accession>
<dbReference type="EC" id="5.3.3.5" evidence="5"/>
<dbReference type="EC" id="3.3.2.11" evidence="1"/>
<dbReference type="EMBL" id="X97755">
    <property type="protein sequence ID" value="CAA66350.1"/>
    <property type="molecule type" value="mRNA"/>
</dbReference>
<dbReference type="EMBL" id="AK012266">
    <property type="protein sequence ID" value="BAB28129.1"/>
    <property type="molecule type" value="mRNA"/>
</dbReference>
<dbReference type="EMBL" id="AK027977">
    <property type="protein sequence ID" value="BAC25686.1"/>
    <property type="molecule type" value="mRNA"/>
</dbReference>
<dbReference type="EMBL" id="BC004703">
    <property type="protein sequence ID" value="AAH04703.1"/>
    <property type="molecule type" value="mRNA"/>
</dbReference>
<dbReference type="EMBL" id="BC004620">
    <property type="protein sequence ID" value="AAH04620.1"/>
    <property type="molecule type" value="mRNA"/>
</dbReference>
<dbReference type="CCDS" id="CCDS29989.1"/>
<dbReference type="RefSeq" id="NP_031924.1">
    <property type="nucleotide sequence ID" value="NM_007898.3"/>
</dbReference>
<dbReference type="SMR" id="P70245"/>
<dbReference type="BioGRID" id="199362">
    <property type="interactions" value="4"/>
</dbReference>
<dbReference type="FunCoup" id="P70245">
    <property type="interactions" value="693"/>
</dbReference>
<dbReference type="STRING" id="10090.ENSMUSP00000033509"/>
<dbReference type="ChEMBL" id="CHEMBL3774293"/>
<dbReference type="SwissLipids" id="SLP:000001210"/>
<dbReference type="GlyGen" id="P70245">
    <property type="glycosylation" value="1 site, 1 O-linked glycan (1 site)"/>
</dbReference>
<dbReference type="iPTMnet" id="P70245"/>
<dbReference type="PhosphoSitePlus" id="P70245"/>
<dbReference type="SwissPalm" id="P70245"/>
<dbReference type="jPOST" id="P70245"/>
<dbReference type="PaxDb" id="10090-ENSMUSP00000033509"/>
<dbReference type="PeptideAtlas" id="P70245"/>
<dbReference type="ProteomicsDB" id="277667"/>
<dbReference type="Pumba" id="P70245"/>
<dbReference type="DNASU" id="13595"/>
<dbReference type="Ensembl" id="ENSMUST00000033509.15">
    <property type="protein sequence ID" value="ENSMUSP00000033509.9"/>
    <property type="gene ID" value="ENSMUSG00000031168.15"/>
</dbReference>
<dbReference type="GeneID" id="13595"/>
<dbReference type="KEGG" id="mmu:13595"/>
<dbReference type="UCSC" id="uc009soi.1">
    <property type="organism name" value="mouse"/>
</dbReference>
<dbReference type="AGR" id="MGI:107822"/>
<dbReference type="CTD" id="10682"/>
<dbReference type="MGI" id="MGI:107822">
    <property type="gene designation" value="Ebp"/>
</dbReference>
<dbReference type="VEuPathDB" id="HostDB:ENSMUSG00000031168"/>
<dbReference type="eggNOG" id="KOG4826">
    <property type="taxonomic scope" value="Eukaryota"/>
</dbReference>
<dbReference type="GeneTree" id="ENSGT00530000063715"/>
<dbReference type="HOGENOM" id="CLU_072128_0_0_1"/>
<dbReference type="InParanoid" id="P70245"/>
<dbReference type="OMA" id="VIEGWFC"/>
<dbReference type="OrthoDB" id="58557at2759"/>
<dbReference type="PhylomeDB" id="P70245"/>
<dbReference type="TreeFam" id="TF314716"/>
<dbReference type="BRENDA" id="5.3.3.5">
    <property type="organism ID" value="3474"/>
</dbReference>
<dbReference type="Reactome" id="R-MMU-6807047">
    <property type="pathway name" value="Cholesterol biosynthesis via desmosterol"/>
</dbReference>
<dbReference type="Reactome" id="R-MMU-6807062">
    <property type="pathway name" value="Cholesterol biosynthesis via lathosterol"/>
</dbReference>
<dbReference type="UniPathway" id="UPA00063"/>
<dbReference type="BioGRID-ORCS" id="13595">
    <property type="hits" value="3 hits in 80 CRISPR screens"/>
</dbReference>
<dbReference type="PRO" id="PR:P70245"/>
<dbReference type="Proteomes" id="UP000000589">
    <property type="component" value="Chromosome X"/>
</dbReference>
<dbReference type="RNAct" id="P70245">
    <property type="molecule type" value="protein"/>
</dbReference>
<dbReference type="Bgee" id="ENSMUSG00000031168">
    <property type="expression patterns" value="Expressed in left lobe of liver and 269 other cell types or tissues"/>
</dbReference>
<dbReference type="ExpressionAtlas" id="P70245">
    <property type="expression patterns" value="baseline and differential"/>
</dbReference>
<dbReference type="GO" id="GO:0031410">
    <property type="term" value="C:cytoplasmic vesicle"/>
    <property type="evidence" value="ECO:0007669"/>
    <property type="project" value="UniProtKB-KW"/>
</dbReference>
<dbReference type="GO" id="GO:0005783">
    <property type="term" value="C:endoplasmic reticulum"/>
    <property type="evidence" value="ECO:0000250"/>
    <property type="project" value="UniProtKB"/>
</dbReference>
<dbReference type="GO" id="GO:0005789">
    <property type="term" value="C:endoplasmic reticulum membrane"/>
    <property type="evidence" value="ECO:0000255"/>
    <property type="project" value="MGI"/>
</dbReference>
<dbReference type="GO" id="GO:0043231">
    <property type="term" value="C:intracellular membrane-bounded organelle"/>
    <property type="evidence" value="ECO:0000250"/>
    <property type="project" value="UniProtKB"/>
</dbReference>
<dbReference type="GO" id="GO:0005635">
    <property type="term" value="C:nuclear envelope"/>
    <property type="evidence" value="ECO:0000250"/>
    <property type="project" value="UniProtKB"/>
</dbReference>
<dbReference type="GO" id="GO:0031965">
    <property type="term" value="C:nuclear membrane"/>
    <property type="evidence" value="ECO:0007669"/>
    <property type="project" value="Ensembl"/>
</dbReference>
<dbReference type="GO" id="GO:0000247">
    <property type="term" value="F:C-8 sterol isomerase activity"/>
    <property type="evidence" value="ECO:0000314"/>
    <property type="project" value="MGI"/>
</dbReference>
<dbReference type="GO" id="GO:0047750">
    <property type="term" value="F:cholestenol delta-isomerase activity"/>
    <property type="evidence" value="ECO:0007669"/>
    <property type="project" value="UniProtKB-EC"/>
</dbReference>
<dbReference type="GO" id="GO:0033963">
    <property type="term" value="F:cholesterol-5,6-oxide hydrolase activity"/>
    <property type="evidence" value="ECO:0000250"/>
    <property type="project" value="UniProtKB"/>
</dbReference>
<dbReference type="GO" id="GO:0042802">
    <property type="term" value="F:identical protein binding"/>
    <property type="evidence" value="ECO:0007669"/>
    <property type="project" value="Ensembl"/>
</dbReference>
<dbReference type="GO" id="GO:0004769">
    <property type="term" value="F:steroid Delta-isomerase activity"/>
    <property type="evidence" value="ECO:0007669"/>
    <property type="project" value="Ensembl"/>
</dbReference>
<dbReference type="GO" id="GO:0006695">
    <property type="term" value="P:cholesterol biosynthetic process"/>
    <property type="evidence" value="ECO:0000250"/>
    <property type="project" value="UniProtKB"/>
</dbReference>
<dbReference type="GO" id="GO:0030097">
    <property type="term" value="P:hemopoiesis"/>
    <property type="evidence" value="ECO:0000315"/>
    <property type="project" value="MGI"/>
</dbReference>
<dbReference type="GO" id="GO:0043931">
    <property type="term" value="P:ossification involved in bone maturation"/>
    <property type="evidence" value="ECO:0007669"/>
    <property type="project" value="Ensembl"/>
</dbReference>
<dbReference type="GO" id="GO:0016126">
    <property type="term" value="P:sterol biosynthetic process"/>
    <property type="evidence" value="ECO:0000315"/>
    <property type="project" value="MGI"/>
</dbReference>
<dbReference type="InterPro" id="IPR007905">
    <property type="entry name" value="EBP"/>
</dbReference>
<dbReference type="InterPro" id="IPR033118">
    <property type="entry name" value="EXPERA"/>
</dbReference>
<dbReference type="PANTHER" id="PTHR14207:SF0">
    <property type="entry name" value="3-BETA-HYDROXYSTEROID-DELTA(8),DELTA(7)-ISOMERASE"/>
    <property type="match status" value="1"/>
</dbReference>
<dbReference type="PANTHER" id="PTHR14207">
    <property type="entry name" value="STEROL ISOMERASE"/>
    <property type="match status" value="1"/>
</dbReference>
<dbReference type="Pfam" id="PF05241">
    <property type="entry name" value="EBP"/>
    <property type="match status" value="1"/>
</dbReference>
<dbReference type="PROSITE" id="PS51751">
    <property type="entry name" value="EXPERA"/>
    <property type="match status" value="1"/>
</dbReference>
<proteinExistence type="evidence at protein level"/>